<keyword id="KW-0150">Chloroplast</keyword>
<keyword id="KW-0240">DNA-directed RNA polymerase</keyword>
<keyword id="KW-0460">Magnesium</keyword>
<keyword id="KW-0479">Metal-binding</keyword>
<keyword id="KW-0548">Nucleotidyltransferase</keyword>
<keyword id="KW-0934">Plastid</keyword>
<keyword id="KW-1185">Reference proteome</keyword>
<keyword id="KW-0804">Transcription</keyword>
<keyword id="KW-0808">Transferase</keyword>
<keyword id="KW-0862">Zinc</keyword>
<reference key="1">
    <citation type="journal article" date="2006" name="Plant Cell Rep.">
        <title>The complete chloroplast genome sequences of Solanum tuberosum and comparative analysis with Solanaceae species identified the presence of a 241-bp deletion in cultivated potato chloroplast DNA sequence.</title>
        <authorList>
            <person name="Chung H.-J."/>
            <person name="Jung J.D."/>
            <person name="Park H.-W."/>
            <person name="Kim J.-H."/>
            <person name="Cha H.W."/>
            <person name="Min S.R."/>
            <person name="Jeong W.-J."/>
            <person name="Liu J.R."/>
        </authorList>
    </citation>
    <scope>NUCLEOTIDE SEQUENCE [LARGE SCALE GENOMIC DNA]</scope>
    <source>
        <strain>cv. Desiree</strain>
    </source>
</reference>
<reference key="2">
    <citation type="submission" date="2006-02" db="EMBL/GenBank/DDBJ databases">
        <title>Complete chloroplast genome sequences of Solanum tuberosum cultivar Desiree and comparative analyses with other Solanaceae genomes.</title>
        <authorList>
            <person name="Gargano D."/>
            <person name="Scotti N."/>
            <person name="Vezzi A."/>
            <person name="Bilardi A."/>
            <person name="Valle G."/>
            <person name="Grillo S."/>
            <person name="Cardi T."/>
        </authorList>
    </citation>
    <scope>NUCLEOTIDE SEQUENCE [LARGE SCALE GENOMIC DNA]</scope>
    <source>
        <strain>cv. Desiree</strain>
    </source>
</reference>
<protein>
    <recommendedName>
        <fullName evidence="1">DNA-directed RNA polymerase subunit beta'</fullName>
        <ecNumber evidence="1">2.7.7.6</ecNumber>
    </recommendedName>
    <alternativeName>
        <fullName evidence="1">PEP</fullName>
    </alternativeName>
    <alternativeName>
        <fullName evidence="1">Plastid-encoded RNA polymerase subunit beta'</fullName>
        <shortName evidence="1">RNA polymerase subunit beta'</shortName>
    </alternativeName>
</protein>
<evidence type="ECO:0000255" key="1">
    <source>
        <dbReference type="HAMAP-Rule" id="MF_01323"/>
    </source>
</evidence>
<evidence type="ECO:0000305" key="2"/>
<dbReference type="EC" id="2.7.7.6" evidence="1"/>
<dbReference type="EMBL" id="DQ231562">
    <property type="protein sequence ID" value="ABB90034.1"/>
    <property type="status" value="ALT_INIT"/>
    <property type="molecule type" value="Genomic_DNA"/>
</dbReference>
<dbReference type="EMBL" id="DQ386163">
    <property type="protein sequence ID" value="ABD47048.1"/>
    <property type="status" value="ALT_INIT"/>
    <property type="molecule type" value="Genomic_DNA"/>
</dbReference>
<dbReference type="RefSeq" id="YP_635630.1">
    <property type="nucleotide sequence ID" value="NC_008096.2"/>
</dbReference>
<dbReference type="SMR" id="Q2VEI5"/>
<dbReference type="FunCoup" id="Q2VEI5">
    <property type="interactions" value="81"/>
</dbReference>
<dbReference type="STRING" id="4113.Q2VEI5"/>
<dbReference type="PaxDb" id="4113-PGSC0003DMT400076161"/>
<dbReference type="GeneID" id="4099931"/>
<dbReference type="KEGG" id="sot:4099931"/>
<dbReference type="eggNOG" id="ENOG502QPYA">
    <property type="taxonomic scope" value="Eukaryota"/>
</dbReference>
<dbReference type="InParanoid" id="Q2VEI5"/>
<dbReference type="OrthoDB" id="1862828at2759"/>
<dbReference type="Proteomes" id="UP000011115">
    <property type="component" value="Unassembled WGS sequence"/>
</dbReference>
<dbReference type="GO" id="GO:0009507">
    <property type="term" value="C:chloroplast"/>
    <property type="evidence" value="ECO:0007669"/>
    <property type="project" value="UniProtKB-SubCell"/>
</dbReference>
<dbReference type="GO" id="GO:0000428">
    <property type="term" value="C:DNA-directed RNA polymerase complex"/>
    <property type="evidence" value="ECO:0007669"/>
    <property type="project" value="UniProtKB-KW"/>
</dbReference>
<dbReference type="GO" id="GO:0005739">
    <property type="term" value="C:mitochondrion"/>
    <property type="evidence" value="ECO:0007669"/>
    <property type="project" value="GOC"/>
</dbReference>
<dbReference type="GO" id="GO:0003677">
    <property type="term" value="F:DNA binding"/>
    <property type="evidence" value="ECO:0007669"/>
    <property type="project" value="UniProtKB-UniRule"/>
</dbReference>
<dbReference type="GO" id="GO:0003899">
    <property type="term" value="F:DNA-directed RNA polymerase activity"/>
    <property type="evidence" value="ECO:0007669"/>
    <property type="project" value="UniProtKB-UniRule"/>
</dbReference>
<dbReference type="GO" id="GO:0000287">
    <property type="term" value="F:magnesium ion binding"/>
    <property type="evidence" value="ECO:0007669"/>
    <property type="project" value="UniProtKB-UniRule"/>
</dbReference>
<dbReference type="GO" id="GO:0008270">
    <property type="term" value="F:zinc ion binding"/>
    <property type="evidence" value="ECO:0007669"/>
    <property type="project" value="UniProtKB-UniRule"/>
</dbReference>
<dbReference type="GO" id="GO:0006351">
    <property type="term" value="P:DNA-templated transcription"/>
    <property type="evidence" value="ECO:0007669"/>
    <property type="project" value="UniProtKB-UniRule"/>
</dbReference>
<dbReference type="FunFam" id="1.10.40.90:FF:000002">
    <property type="entry name" value="DNA-directed RNA polymerase subunit"/>
    <property type="match status" value="1"/>
</dbReference>
<dbReference type="FunFam" id="4.10.860.120:FF:000007">
    <property type="entry name" value="DNA-directed RNA polymerase subunit gamma"/>
    <property type="match status" value="1"/>
</dbReference>
<dbReference type="Gene3D" id="1.10.40.90">
    <property type="match status" value="1"/>
</dbReference>
<dbReference type="Gene3D" id="2.40.40.20">
    <property type="match status" value="1"/>
</dbReference>
<dbReference type="Gene3D" id="4.10.860.120">
    <property type="entry name" value="RNA polymerase II, clamp domain"/>
    <property type="match status" value="1"/>
</dbReference>
<dbReference type="Gene3D" id="1.10.274.100">
    <property type="entry name" value="RNA polymerase Rpb1, domain 3"/>
    <property type="match status" value="1"/>
</dbReference>
<dbReference type="HAMAP" id="MF_01323">
    <property type="entry name" value="RNApol_bact_RpoC1"/>
    <property type="match status" value="1"/>
</dbReference>
<dbReference type="InterPro" id="IPR045867">
    <property type="entry name" value="DNA-dir_RpoC_beta_prime"/>
</dbReference>
<dbReference type="InterPro" id="IPR000722">
    <property type="entry name" value="RNA_pol_asu"/>
</dbReference>
<dbReference type="InterPro" id="IPR006592">
    <property type="entry name" value="RNA_pol_N"/>
</dbReference>
<dbReference type="InterPro" id="IPR007080">
    <property type="entry name" value="RNA_pol_Rpb1_1"/>
</dbReference>
<dbReference type="InterPro" id="IPR042102">
    <property type="entry name" value="RNA_pol_Rpb1_3_sf"/>
</dbReference>
<dbReference type="InterPro" id="IPR044893">
    <property type="entry name" value="RNA_pol_Rpb1_clamp_domain"/>
</dbReference>
<dbReference type="InterPro" id="IPR034678">
    <property type="entry name" value="RNApol_RpoC1"/>
</dbReference>
<dbReference type="PANTHER" id="PTHR19376">
    <property type="entry name" value="DNA-DIRECTED RNA POLYMERASE"/>
    <property type="match status" value="1"/>
</dbReference>
<dbReference type="PANTHER" id="PTHR19376:SF54">
    <property type="entry name" value="DNA-DIRECTED RNA POLYMERASE SUBUNIT BETA"/>
    <property type="match status" value="1"/>
</dbReference>
<dbReference type="Pfam" id="PF04997">
    <property type="entry name" value="RNA_pol_Rpb1_1"/>
    <property type="match status" value="1"/>
</dbReference>
<dbReference type="Pfam" id="PF00623">
    <property type="entry name" value="RNA_pol_Rpb1_2"/>
    <property type="match status" value="2"/>
</dbReference>
<dbReference type="SMART" id="SM00663">
    <property type="entry name" value="RPOLA_N"/>
    <property type="match status" value="1"/>
</dbReference>
<dbReference type="SUPFAM" id="SSF64484">
    <property type="entry name" value="beta and beta-prime subunits of DNA dependent RNA-polymerase"/>
    <property type="match status" value="1"/>
</dbReference>
<organism>
    <name type="scientific">Solanum tuberosum</name>
    <name type="common">Potato</name>
    <dbReference type="NCBI Taxonomy" id="4113"/>
    <lineage>
        <taxon>Eukaryota</taxon>
        <taxon>Viridiplantae</taxon>
        <taxon>Streptophyta</taxon>
        <taxon>Embryophyta</taxon>
        <taxon>Tracheophyta</taxon>
        <taxon>Spermatophyta</taxon>
        <taxon>Magnoliopsida</taxon>
        <taxon>eudicotyledons</taxon>
        <taxon>Gunneridae</taxon>
        <taxon>Pentapetalae</taxon>
        <taxon>asterids</taxon>
        <taxon>lamiids</taxon>
        <taxon>Solanales</taxon>
        <taxon>Solanaceae</taxon>
        <taxon>Solanoideae</taxon>
        <taxon>Solaneae</taxon>
        <taxon>Solanum</taxon>
    </lineage>
</organism>
<comment type="function">
    <text evidence="1">DNA-dependent RNA polymerase catalyzes the transcription of DNA into RNA using the four ribonucleoside triphosphates as substrates.</text>
</comment>
<comment type="catalytic activity">
    <reaction evidence="1">
        <text>RNA(n) + a ribonucleoside 5'-triphosphate = RNA(n+1) + diphosphate</text>
        <dbReference type="Rhea" id="RHEA:21248"/>
        <dbReference type="Rhea" id="RHEA-COMP:14527"/>
        <dbReference type="Rhea" id="RHEA-COMP:17342"/>
        <dbReference type="ChEBI" id="CHEBI:33019"/>
        <dbReference type="ChEBI" id="CHEBI:61557"/>
        <dbReference type="ChEBI" id="CHEBI:140395"/>
        <dbReference type="EC" id="2.7.7.6"/>
    </reaction>
</comment>
<comment type="cofactor">
    <cofactor evidence="1">
        <name>Mg(2+)</name>
        <dbReference type="ChEBI" id="CHEBI:18420"/>
    </cofactor>
    <text evidence="1">Binds 1 Mg(2+) ion per subunit.</text>
</comment>
<comment type="cofactor">
    <cofactor evidence="1">
        <name>Zn(2+)</name>
        <dbReference type="ChEBI" id="CHEBI:29105"/>
    </cofactor>
    <text evidence="1">Binds 1 Zn(2+) ion per subunit.</text>
</comment>
<comment type="subunit">
    <text evidence="1">In plastids the minimal PEP RNA polymerase catalytic core is composed of four subunits: alpha, beta, beta', and beta''. When a (nuclear-encoded) sigma factor is associated with the core the holoenzyme is formed, which can initiate transcription.</text>
</comment>
<comment type="subcellular location">
    <subcellularLocation>
        <location evidence="1">Plastid</location>
        <location evidence="1">Chloroplast</location>
    </subcellularLocation>
</comment>
<comment type="similarity">
    <text evidence="1">Belongs to the RNA polymerase beta' chain family. RpoC1 subfamily.</text>
</comment>
<comment type="sequence caution" evidence="2">
    <conflict type="erroneous initiation">
        <sequence resource="EMBL-CDS" id="ABB90034"/>
    </conflict>
    <text>Extended N-terminus.</text>
</comment>
<comment type="sequence caution" evidence="2">
    <conflict type="erroneous initiation">
        <sequence resource="EMBL-CDS" id="ABD47048"/>
    </conflict>
    <text>Extended N-terminus.</text>
</comment>
<name>RPOC1_SOLTU</name>
<gene>
    <name evidence="1" type="primary">rpoC1</name>
</gene>
<sequence>MIDRYKHQQLRIGSVSPQQISAWATKILPNGEIVGEVTKPYTFHYKTNKPEKDGLFCERIFGPIKSGICACGNYRVIGDEKEDPKFCEQCGVEFVDSRIRRYQMGYIKLACPVTHVWYLKRLPSYIANLLDKPLKELEGLVYCDIESYPNFSFARPITKKPTFLRLRGLFEYEIQSWKYSIPLFFTTKGFDTFRNREIYTGAGAIREQLADLDLRIIIENSLVEWEELGEEGHTGNEWEDRKVGRRKDFLVRRVELAKHFIQSNIDPQWMVWCLLPVLPPELRPIIRIDGGKLMSSDISELYRKVIYRNNTLTDLLRTSKSTPGELVMCQEKLVQEAVDTLLDNGIRGQPMRDGHNKVYKSFSDVIEGKEGRFRETLLGKRVDYSGRSVIVVGPSLSLHRCGLPREIAIELFQTFVIRGLIRQHLASNIGVAKSKIREKEPIVWEILQEVMQGHPVLLNRAPTLHRLGIQAFQPVLVEGRAICLHPLVCKGFHADFDGDQMDFKVPLSLEAQVEARLLMFSHMNLLSPAIGDPISVPTQDMLIGLYVLTSGNHRGICVNRYNPCNRRNYQNQKRSDNSYYKYTKEPFFSNSYDAIGAYRQKRINLDSPLWLRWRLDQRVIASRETPIEVHYESLGTFYEIYGHYLIVRSLKKKILFIYIRTTVGHIALYREIEEAIQGFSRAYSYAT</sequence>
<accession>Q2VEI5</accession>
<accession>Q27S59</accession>
<feature type="chain" id="PRO_0000225325" description="DNA-directed RNA polymerase subunit beta'">
    <location>
        <begin position="1"/>
        <end position="687"/>
    </location>
</feature>
<feature type="binding site" evidence="1">
    <location>
        <position position="69"/>
    </location>
    <ligand>
        <name>Zn(2+)</name>
        <dbReference type="ChEBI" id="CHEBI:29105"/>
    </ligand>
</feature>
<feature type="binding site" evidence="1">
    <location>
        <position position="71"/>
    </location>
    <ligand>
        <name>Zn(2+)</name>
        <dbReference type="ChEBI" id="CHEBI:29105"/>
    </ligand>
</feature>
<feature type="binding site" evidence="1">
    <location>
        <position position="87"/>
    </location>
    <ligand>
        <name>Zn(2+)</name>
        <dbReference type="ChEBI" id="CHEBI:29105"/>
    </ligand>
</feature>
<feature type="binding site" evidence="1">
    <location>
        <position position="90"/>
    </location>
    <ligand>
        <name>Zn(2+)</name>
        <dbReference type="ChEBI" id="CHEBI:29105"/>
    </ligand>
</feature>
<feature type="binding site" evidence="1">
    <location>
        <position position="495"/>
    </location>
    <ligand>
        <name>Mg(2+)</name>
        <dbReference type="ChEBI" id="CHEBI:18420"/>
    </ligand>
</feature>
<feature type="binding site" evidence="1">
    <location>
        <position position="497"/>
    </location>
    <ligand>
        <name>Mg(2+)</name>
        <dbReference type="ChEBI" id="CHEBI:18420"/>
    </ligand>
</feature>
<feature type="binding site" evidence="1">
    <location>
        <position position="499"/>
    </location>
    <ligand>
        <name>Mg(2+)</name>
        <dbReference type="ChEBI" id="CHEBI:18420"/>
    </ligand>
</feature>
<feature type="sequence conflict" description="In Ref. 2; ABD47048." evidence="2" ref="2">
    <location>
        <begin position="145"/>
        <end position="150"/>
    </location>
</feature>
<feature type="sequence conflict" description="In Ref. 2; ABD47048." evidence="2" ref="2">
    <original>K</original>
    <variation>Q</variation>
    <location>
        <position position="188"/>
    </location>
</feature>
<feature type="sequence conflict" description="In Ref. 2; ABD47048." evidence="2" ref="2">
    <original>Y</original>
    <variation>S</variation>
    <location>
        <position position="199"/>
    </location>
</feature>
<feature type="sequence conflict" description="In Ref. 2; ABD47048." evidence="2" ref="2">
    <original>QS</original>
    <variation>RT</variation>
    <location>
        <begin position="262"/>
        <end position="263"/>
    </location>
</feature>
<feature type="sequence conflict" description="In Ref. 2; ABD47048." evidence="2" ref="2">
    <original>DPQ</original>
    <variation>EPE</variation>
    <location>
        <begin position="266"/>
        <end position="268"/>
    </location>
</feature>
<feature type="sequence conflict" description="In Ref. 2; ABD47048." evidence="2" ref="2">
    <original>W</original>
    <variation>L</variation>
    <location>
        <position position="272"/>
    </location>
</feature>
<feature type="sequence conflict" description="In Ref. 2; ABD47048." evidence="2" ref="2">
    <original>R</original>
    <variation>Q</variation>
    <location>
        <position position="287"/>
    </location>
</feature>
<feature type="sequence conflict" description="In Ref. 2; ABD47048." evidence="2" ref="2">
    <original>S</original>
    <variation>N</variation>
    <location>
        <position position="299"/>
    </location>
</feature>
<feature type="sequence conflict" description="In Ref. 2; ABD47048." evidence="2" ref="2">
    <original>K</original>
    <variation>R</variation>
    <location>
        <position position="304"/>
    </location>
</feature>
<feature type="sequence conflict" description="In Ref. 2; ABD47048." evidence="2" ref="2">
    <original>R</original>
    <variation>T</variation>
    <location>
        <position position="317"/>
    </location>
</feature>
<feature type="sequence conflict" description="In Ref. 2; ABD47048." evidence="2" ref="2">
    <original>K</original>
    <variation>R</variation>
    <location>
        <position position="320"/>
    </location>
</feature>
<feature type="sequence conflict" description="In Ref. 2; ABD47048." evidence="2" ref="2">
    <original>H</original>
    <variation>N</variation>
    <location>
        <position position="493"/>
    </location>
</feature>
<feature type="sequence conflict" description="In Ref. 2; ABD47048." evidence="2" ref="2">
    <original>DFK</original>
    <variation>AVH</variation>
    <location>
        <begin position="502"/>
        <end position="504"/>
    </location>
</feature>
<proteinExistence type="inferred from homology"/>
<geneLocation type="chloroplast"/>